<reference key="1">
    <citation type="journal article" date="2004" name="Proc. Natl. Acad. Sci. U.S.A.">
        <title>Structural flexibility in the Burkholderia mallei genome.</title>
        <authorList>
            <person name="Nierman W.C."/>
            <person name="DeShazer D."/>
            <person name="Kim H.S."/>
            <person name="Tettelin H."/>
            <person name="Nelson K.E."/>
            <person name="Feldblyum T.V."/>
            <person name="Ulrich R.L."/>
            <person name="Ronning C.M."/>
            <person name="Brinkac L.M."/>
            <person name="Daugherty S.C."/>
            <person name="Davidsen T.D."/>
            <person name="DeBoy R.T."/>
            <person name="Dimitrov G."/>
            <person name="Dodson R.J."/>
            <person name="Durkin A.S."/>
            <person name="Gwinn M.L."/>
            <person name="Haft D.H."/>
            <person name="Khouri H.M."/>
            <person name="Kolonay J.F."/>
            <person name="Madupu R."/>
            <person name="Mohammoud Y."/>
            <person name="Nelson W.C."/>
            <person name="Radune D."/>
            <person name="Romero C.M."/>
            <person name="Sarria S."/>
            <person name="Selengut J."/>
            <person name="Shamblin C."/>
            <person name="Sullivan S.A."/>
            <person name="White O."/>
            <person name="Yu Y."/>
            <person name="Zafar N."/>
            <person name="Zhou L."/>
            <person name="Fraser C.M."/>
        </authorList>
    </citation>
    <scope>NUCLEOTIDE SEQUENCE [LARGE SCALE GENOMIC DNA]</scope>
    <source>
        <strain>ATCC 23344</strain>
    </source>
</reference>
<protein>
    <recommendedName>
        <fullName evidence="1">4-hydroxy-3-methylbut-2-enyl diphosphate reductase 2</fullName>
        <shortName evidence="1">HMBPP reductase 2</shortName>
        <ecNumber evidence="1">1.17.7.4</ecNumber>
    </recommendedName>
</protein>
<evidence type="ECO:0000255" key="1">
    <source>
        <dbReference type="HAMAP-Rule" id="MF_00191"/>
    </source>
</evidence>
<comment type="function">
    <text evidence="1">Catalyzes the conversion of 1-hydroxy-2-methyl-2-(E)-butenyl 4-diphosphate (HMBPP) into a mixture of isopentenyl diphosphate (IPP) and dimethylallyl diphosphate (DMAPP). Acts in the terminal step of the DOXP/MEP pathway for isoprenoid precursor biosynthesis.</text>
</comment>
<comment type="catalytic activity">
    <reaction evidence="1">
        <text>isopentenyl diphosphate + 2 oxidized [2Fe-2S]-[ferredoxin] + H2O = (2E)-4-hydroxy-3-methylbut-2-enyl diphosphate + 2 reduced [2Fe-2S]-[ferredoxin] + 2 H(+)</text>
        <dbReference type="Rhea" id="RHEA:24488"/>
        <dbReference type="Rhea" id="RHEA-COMP:10000"/>
        <dbReference type="Rhea" id="RHEA-COMP:10001"/>
        <dbReference type="ChEBI" id="CHEBI:15377"/>
        <dbReference type="ChEBI" id="CHEBI:15378"/>
        <dbReference type="ChEBI" id="CHEBI:33737"/>
        <dbReference type="ChEBI" id="CHEBI:33738"/>
        <dbReference type="ChEBI" id="CHEBI:128753"/>
        <dbReference type="ChEBI" id="CHEBI:128769"/>
        <dbReference type="EC" id="1.17.7.4"/>
    </reaction>
</comment>
<comment type="catalytic activity">
    <reaction evidence="1">
        <text>dimethylallyl diphosphate + 2 oxidized [2Fe-2S]-[ferredoxin] + H2O = (2E)-4-hydroxy-3-methylbut-2-enyl diphosphate + 2 reduced [2Fe-2S]-[ferredoxin] + 2 H(+)</text>
        <dbReference type="Rhea" id="RHEA:24825"/>
        <dbReference type="Rhea" id="RHEA-COMP:10000"/>
        <dbReference type="Rhea" id="RHEA-COMP:10001"/>
        <dbReference type="ChEBI" id="CHEBI:15377"/>
        <dbReference type="ChEBI" id="CHEBI:15378"/>
        <dbReference type="ChEBI" id="CHEBI:33737"/>
        <dbReference type="ChEBI" id="CHEBI:33738"/>
        <dbReference type="ChEBI" id="CHEBI:57623"/>
        <dbReference type="ChEBI" id="CHEBI:128753"/>
        <dbReference type="EC" id="1.17.7.4"/>
    </reaction>
</comment>
<comment type="cofactor">
    <cofactor evidence="1">
        <name>[4Fe-4S] cluster</name>
        <dbReference type="ChEBI" id="CHEBI:49883"/>
    </cofactor>
    <text evidence="1">Binds 1 [4Fe-4S] cluster per subunit.</text>
</comment>
<comment type="pathway">
    <text evidence="1">Isoprenoid biosynthesis; dimethylallyl diphosphate biosynthesis; dimethylallyl diphosphate from (2E)-4-hydroxy-3-methylbutenyl diphosphate: step 1/1.</text>
</comment>
<comment type="pathway">
    <text evidence="1">Isoprenoid biosynthesis; isopentenyl diphosphate biosynthesis via DXP pathway; isopentenyl diphosphate from 1-deoxy-D-xylulose 5-phosphate: step 6/6.</text>
</comment>
<comment type="similarity">
    <text evidence="1">Belongs to the IspH family.</text>
</comment>
<proteinExistence type="inferred from homology"/>
<feature type="chain" id="PRO_0000128792" description="4-hydroxy-3-methylbut-2-enyl diphosphate reductase 2">
    <location>
        <begin position="1"/>
        <end position="326"/>
    </location>
</feature>
<feature type="active site" description="Proton donor" evidence="1">
    <location>
        <position position="141"/>
    </location>
</feature>
<feature type="binding site" evidence="1">
    <location>
        <position position="27"/>
    </location>
    <ligand>
        <name>[4Fe-4S] cluster</name>
        <dbReference type="ChEBI" id="CHEBI:49883"/>
    </ligand>
</feature>
<feature type="binding site" evidence="1">
    <location>
        <position position="56"/>
    </location>
    <ligand>
        <name>(2E)-4-hydroxy-3-methylbut-2-enyl diphosphate</name>
        <dbReference type="ChEBI" id="CHEBI:128753"/>
    </ligand>
</feature>
<feature type="binding site" evidence="1">
    <location>
        <position position="56"/>
    </location>
    <ligand>
        <name>dimethylallyl diphosphate</name>
        <dbReference type="ChEBI" id="CHEBI:57623"/>
    </ligand>
</feature>
<feature type="binding site" evidence="1">
    <location>
        <position position="56"/>
    </location>
    <ligand>
        <name>isopentenyl diphosphate</name>
        <dbReference type="ChEBI" id="CHEBI:128769"/>
    </ligand>
</feature>
<feature type="binding site" evidence="1">
    <location>
        <position position="89"/>
    </location>
    <ligand>
        <name>(2E)-4-hydroxy-3-methylbut-2-enyl diphosphate</name>
        <dbReference type="ChEBI" id="CHEBI:128753"/>
    </ligand>
</feature>
<feature type="binding site" evidence="1">
    <location>
        <position position="89"/>
    </location>
    <ligand>
        <name>dimethylallyl diphosphate</name>
        <dbReference type="ChEBI" id="CHEBI:57623"/>
    </ligand>
</feature>
<feature type="binding site" evidence="1">
    <location>
        <position position="89"/>
    </location>
    <ligand>
        <name>isopentenyl diphosphate</name>
        <dbReference type="ChEBI" id="CHEBI:128769"/>
    </ligand>
</feature>
<feature type="binding site" evidence="1">
    <location>
        <position position="111"/>
    </location>
    <ligand>
        <name>[4Fe-4S] cluster</name>
        <dbReference type="ChEBI" id="CHEBI:49883"/>
    </ligand>
</feature>
<feature type="binding site" evidence="1">
    <location>
        <position position="139"/>
    </location>
    <ligand>
        <name>(2E)-4-hydroxy-3-methylbut-2-enyl diphosphate</name>
        <dbReference type="ChEBI" id="CHEBI:128753"/>
    </ligand>
</feature>
<feature type="binding site" evidence="1">
    <location>
        <position position="139"/>
    </location>
    <ligand>
        <name>dimethylallyl diphosphate</name>
        <dbReference type="ChEBI" id="CHEBI:57623"/>
    </ligand>
</feature>
<feature type="binding site" evidence="1">
    <location>
        <position position="139"/>
    </location>
    <ligand>
        <name>isopentenyl diphosphate</name>
        <dbReference type="ChEBI" id="CHEBI:128769"/>
    </ligand>
</feature>
<feature type="binding site" evidence="1">
    <location>
        <position position="179"/>
    </location>
    <ligand>
        <name>(2E)-4-hydroxy-3-methylbut-2-enyl diphosphate</name>
        <dbReference type="ChEBI" id="CHEBI:128753"/>
    </ligand>
</feature>
<feature type="binding site" evidence="1">
    <location>
        <position position="209"/>
    </location>
    <ligand>
        <name>[4Fe-4S] cluster</name>
        <dbReference type="ChEBI" id="CHEBI:49883"/>
    </ligand>
</feature>
<feature type="binding site" evidence="1">
    <location>
        <position position="237"/>
    </location>
    <ligand>
        <name>(2E)-4-hydroxy-3-methylbut-2-enyl diphosphate</name>
        <dbReference type="ChEBI" id="CHEBI:128753"/>
    </ligand>
</feature>
<feature type="binding site" evidence="1">
    <location>
        <position position="237"/>
    </location>
    <ligand>
        <name>dimethylallyl diphosphate</name>
        <dbReference type="ChEBI" id="CHEBI:57623"/>
    </ligand>
</feature>
<feature type="binding site" evidence="1">
    <location>
        <position position="237"/>
    </location>
    <ligand>
        <name>isopentenyl diphosphate</name>
        <dbReference type="ChEBI" id="CHEBI:128769"/>
    </ligand>
</feature>
<feature type="binding site" evidence="1">
    <location>
        <position position="238"/>
    </location>
    <ligand>
        <name>(2E)-4-hydroxy-3-methylbut-2-enyl diphosphate</name>
        <dbReference type="ChEBI" id="CHEBI:128753"/>
    </ligand>
</feature>
<feature type="binding site" evidence="1">
    <location>
        <position position="238"/>
    </location>
    <ligand>
        <name>dimethylallyl diphosphate</name>
        <dbReference type="ChEBI" id="CHEBI:57623"/>
    </ligand>
</feature>
<feature type="binding site" evidence="1">
    <location>
        <position position="238"/>
    </location>
    <ligand>
        <name>isopentenyl diphosphate</name>
        <dbReference type="ChEBI" id="CHEBI:128769"/>
    </ligand>
</feature>
<feature type="binding site" evidence="1">
    <location>
        <position position="239"/>
    </location>
    <ligand>
        <name>(2E)-4-hydroxy-3-methylbut-2-enyl diphosphate</name>
        <dbReference type="ChEBI" id="CHEBI:128753"/>
    </ligand>
</feature>
<feature type="binding site" evidence="1">
    <location>
        <position position="239"/>
    </location>
    <ligand>
        <name>dimethylallyl diphosphate</name>
        <dbReference type="ChEBI" id="CHEBI:57623"/>
    </ligand>
</feature>
<feature type="binding site" evidence="1">
    <location>
        <position position="239"/>
    </location>
    <ligand>
        <name>isopentenyl diphosphate</name>
        <dbReference type="ChEBI" id="CHEBI:128769"/>
    </ligand>
</feature>
<feature type="binding site" evidence="1">
    <location>
        <position position="281"/>
    </location>
    <ligand>
        <name>(2E)-4-hydroxy-3-methylbut-2-enyl diphosphate</name>
        <dbReference type="ChEBI" id="CHEBI:128753"/>
    </ligand>
</feature>
<feature type="binding site" evidence="1">
    <location>
        <position position="281"/>
    </location>
    <ligand>
        <name>dimethylallyl diphosphate</name>
        <dbReference type="ChEBI" id="CHEBI:57623"/>
    </ligand>
</feature>
<feature type="binding site" evidence="1">
    <location>
        <position position="281"/>
    </location>
    <ligand>
        <name>isopentenyl diphosphate</name>
        <dbReference type="ChEBI" id="CHEBI:128769"/>
    </ligand>
</feature>
<gene>
    <name evidence="1" type="primary">ispH2</name>
    <name type="synonym">ispH-2</name>
    <name type="ordered locus">BMA2228</name>
</gene>
<keyword id="KW-0004">4Fe-4S</keyword>
<keyword id="KW-0408">Iron</keyword>
<keyword id="KW-0411">Iron-sulfur</keyword>
<keyword id="KW-0414">Isoprene biosynthesis</keyword>
<keyword id="KW-0479">Metal-binding</keyword>
<keyword id="KW-0560">Oxidoreductase</keyword>
<keyword id="KW-1185">Reference proteome</keyword>
<name>ISPH2_BURMA</name>
<organism>
    <name type="scientific">Burkholderia mallei (strain ATCC 23344)</name>
    <dbReference type="NCBI Taxonomy" id="243160"/>
    <lineage>
        <taxon>Bacteria</taxon>
        <taxon>Pseudomonadati</taxon>
        <taxon>Pseudomonadota</taxon>
        <taxon>Betaproteobacteria</taxon>
        <taxon>Burkholderiales</taxon>
        <taxon>Burkholderiaceae</taxon>
        <taxon>Burkholderia</taxon>
        <taxon>pseudomallei group</taxon>
    </lineage>
</organism>
<sequence length="326" mass="35162">MSSTDTLSGQVAAADAEILLAQPRGFCAGVDRAIEIVERAIAMHGAPIYVRHEIVHNKYVVEDLKKKGAIFVEELEEVPSGNTVIFSAHGVSKAVRDEAAVRGLRIYDATCPLVTKVHVEVAKMRQEGVDIVMIGHKGHPEVEGTMGQVERGMHLVESVEDVRRLELPDPERVALVTQTTLSVDDAAEIIGALKAKFPAIREPKKQDICYATQNRQDAVKFMAPQCDVVIVVGSPNSSNSSRLREVAEKRGVAAYMVDAPEQIDPAWVAGKRRIGVTAGASAPEVLAQAVIARLRELGVTNVRALEGIEENVSFPLPRGLNLSSAA</sequence>
<dbReference type="EC" id="1.17.7.4" evidence="1"/>
<dbReference type="EMBL" id="CP000010">
    <property type="protein sequence ID" value="AAU50259.1"/>
    <property type="molecule type" value="Genomic_DNA"/>
</dbReference>
<dbReference type="RefSeq" id="YP_103792.1">
    <property type="nucleotide sequence ID" value="NC_006348.1"/>
</dbReference>
<dbReference type="SMR" id="Q62HM8"/>
<dbReference type="KEGG" id="bma:BMA2228"/>
<dbReference type="PATRIC" id="fig|243160.12.peg.2292"/>
<dbReference type="eggNOG" id="COG0761">
    <property type="taxonomic scope" value="Bacteria"/>
</dbReference>
<dbReference type="HOGENOM" id="CLU_027486_1_0_4"/>
<dbReference type="UniPathway" id="UPA00056">
    <property type="reaction ID" value="UER00097"/>
</dbReference>
<dbReference type="UniPathway" id="UPA00059">
    <property type="reaction ID" value="UER00105"/>
</dbReference>
<dbReference type="Proteomes" id="UP000006693">
    <property type="component" value="Chromosome 1"/>
</dbReference>
<dbReference type="GO" id="GO:0051539">
    <property type="term" value="F:4 iron, 4 sulfur cluster binding"/>
    <property type="evidence" value="ECO:0007669"/>
    <property type="project" value="UniProtKB-UniRule"/>
</dbReference>
<dbReference type="GO" id="GO:0051745">
    <property type="term" value="F:4-hydroxy-3-methylbut-2-enyl diphosphate reductase activity"/>
    <property type="evidence" value="ECO:0007669"/>
    <property type="project" value="UniProtKB-UniRule"/>
</dbReference>
<dbReference type="GO" id="GO:0046872">
    <property type="term" value="F:metal ion binding"/>
    <property type="evidence" value="ECO:0007669"/>
    <property type="project" value="UniProtKB-KW"/>
</dbReference>
<dbReference type="GO" id="GO:0050992">
    <property type="term" value="P:dimethylallyl diphosphate biosynthetic process"/>
    <property type="evidence" value="ECO:0007669"/>
    <property type="project" value="UniProtKB-UniRule"/>
</dbReference>
<dbReference type="GO" id="GO:0019288">
    <property type="term" value="P:isopentenyl diphosphate biosynthetic process, methylerythritol 4-phosphate pathway"/>
    <property type="evidence" value="ECO:0007669"/>
    <property type="project" value="UniProtKB-UniRule"/>
</dbReference>
<dbReference type="GO" id="GO:0016114">
    <property type="term" value="P:terpenoid biosynthetic process"/>
    <property type="evidence" value="ECO:0007669"/>
    <property type="project" value="UniProtKB-UniRule"/>
</dbReference>
<dbReference type="CDD" id="cd13944">
    <property type="entry name" value="lytB_ispH"/>
    <property type="match status" value="1"/>
</dbReference>
<dbReference type="Gene3D" id="3.40.50.11270">
    <property type="match status" value="1"/>
</dbReference>
<dbReference type="Gene3D" id="3.40.1010.20">
    <property type="entry name" value="4-hydroxy-3-methylbut-2-enyl diphosphate reductase, catalytic domain"/>
    <property type="match status" value="2"/>
</dbReference>
<dbReference type="HAMAP" id="MF_00191">
    <property type="entry name" value="IspH"/>
    <property type="match status" value="1"/>
</dbReference>
<dbReference type="InterPro" id="IPR003451">
    <property type="entry name" value="LytB/IspH"/>
</dbReference>
<dbReference type="NCBIfam" id="TIGR00216">
    <property type="entry name" value="ispH_lytB"/>
    <property type="match status" value="1"/>
</dbReference>
<dbReference type="NCBIfam" id="NF002188">
    <property type="entry name" value="PRK01045.1-2"/>
    <property type="match status" value="1"/>
</dbReference>
<dbReference type="NCBIfam" id="NF002190">
    <property type="entry name" value="PRK01045.1-4"/>
    <property type="match status" value="1"/>
</dbReference>
<dbReference type="PANTHER" id="PTHR30426">
    <property type="entry name" value="4-HYDROXY-3-METHYLBUT-2-ENYL DIPHOSPHATE REDUCTASE"/>
    <property type="match status" value="1"/>
</dbReference>
<dbReference type="PANTHER" id="PTHR30426:SF0">
    <property type="entry name" value="4-HYDROXY-3-METHYLBUT-2-ENYL DIPHOSPHATE REDUCTASE"/>
    <property type="match status" value="1"/>
</dbReference>
<dbReference type="Pfam" id="PF02401">
    <property type="entry name" value="LYTB"/>
    <property type="match status" value="1"/>
</dbReference>
<accession>Q62HM8</accession>